<protein>
    <recommendedName>
        <fullName evidence="1">D-aminoacyl-tRNA deacylase</fullName>
        <shortName evidence="1">DTD</shortName>
        <ecNumber evidence="1">3.1.1.96</ecNumber>
    </recommendedName>
    <alternativeName>
        <fullName evidence="1">Gly-tRNA(Ala) deacylase</fullName>
    </alternativeName>
</protein>
<dbReference type="EC" id="3.1.1.96" evidence="1"/>
<dbReference type="EMBL" id="AE003852">
    <property type="protein sequence ID" value="AAF95880.1"/>
    <property type="molecule type" value="Genomic_DNA"/>
</dbReference>
<dbReference type="PIR" id="E82039">
    <property type="entry name" value="E82039"/>
</dbReference>
<dbReference type="RefSeq" id="NP_232367.1">
    <property type="nucleotide sequence ID" value="NC_002505.1"/>
</dbReference>
<dbReference type="RefSeq" id="WP_000560961.1">
    <property type="nucleotide sequence ID" value="NZ_LT906614.1"/>
</dbReference>
<dbReference type="SMR" id="Q9KNJ7"/>
<dbReference type="STRING" id="243277.VC_2741"/>
<dbReference type="DNASU" id="2614904"/>
<dbReference type="EnsemblBacteria" id="AAF95880">
    <property type="protein sequence ID" value="AAF95880"/>
    <property type="gene ID" value="VC_2741"/>
</dbReference>
<dbReference type="GeneID" id="89513272"/>
<dbReference type="KEGG" id="vch:VC_2741"/>
<dbReference type="PATRIC" id="fig|243277.26.peg.2616"/>
<dbReference type="eggNOG" id="COG1490">
    <property type="taxonomic scope" value="Bacteria"/>
</dbReference>
<dbReference type="HOGENOM" id="CLU_076901_1_1_6"/>
<dbReference type="Proteomes" id="UP000000584">
    <property type="component" value="Chromosome 1"/>
</dbReference>
<dbReference type="GO" id="GO:0005737">
    <property type="term" value="C:cytoplasm"/>
    <property type="evidence" value="ECO:0000318"/>
    <property type="project" value="GO_Central"/>
</dbReference>
<dbReference type="GO" id="GO:0051500">
    <property type="term" value="F:D-tyrosyl-tRNA(Tyr) deacylase activity"/>
    <property type="evidence" value="ECO:0000318"/>
    <property type="project" value="GO_Central"/>
</dbReference>
<dbReference type="GO" id="GO:0106026">
    <property type="term" value="F:Gly-tRNA(Ala) deacylase activity"/>
    <property type="evidence" value="ECO:0007669"/>
    <property type="project" value="UniProtKB-UniRule"/>
</dbReference>
<dbReference type="GO" id="GO:0043908">
    <property type="term" value="F:Ser(Gly)-tRNA(Ala) hydrolase activity"/>
    <property type="evidence" value="ECO:0007669"/>
    <property type="project" value="UniProtKB-UniRule"/>
</dbReference>
<dbReference type="GO" id="GO:0000049">
    <property type="term" value="F:tRNA binding"/>
    <property type="evidence" value="ECO:0007669"/>
    <property type="project" value="UniProtKB-UniRule"/>
</dbReference>
<dbReference type="GO" id="GO:0019478">
    <property type="term" value="P:D-amino acid catabolic process"/>
    <property type="evidence" value="ECO:0007669"/>
    <property type="project" value="UniProtKB-UniRule"/>
</dbReference>
<dbReference type="GO" id="GO:0006399">
    <property type="term" value="P:tRNA metabolic process"/>
    <property type="evidence" value="ECO:0000318"/>
    <property type="project" value="GO_Central"/>
</dbReference>
<dbReference type="CDD" id="cd00563">
    <property type="entry name" value="Dtyr_deacylase"/>
    <property type="match status" value="1"/>
</dbReference>
<dbReference type="FunFam" id="3.50.80.10:FF:000001">
    <property type="entry name" value="D-aminoacyl-tRNA deacylase"/>
    <property type="match status" value="1"/>
</dbReference>
<dbReference type="Gene3D" id="3.50.80.10">
    <property type="entry name" value="D-tyrosyl-tRNA(Tyr) deacylase"/>
    <property type="match status" value="1"/>
</dbReference>
<dbReference type="HAMAP" id="MF_00518">
    <property type="entry name" value="Deacylase_Dtd"/>
    <property type="match status" value="1"/>
</dbReference>
<dbReference type="InterPro" id="IPR003732">
    <property type="entry name" value="Daa-tRNA_deacyls_DTD"/>
</dbReference>
<dbReference type="InterPro" id="IPR023509">
    <property type="entry name" value="DTD-like_sf"/>
</dbReference>
<dbReference type="NCBIfam" id="TIGR00256">
    <property type="entry name" value="D-aminoacyl-tRNA deacylase"/>
    <property type="match status" value="1"/>
</dbReference>
<dbReference type="PANTHER" id="PTHR10472:SF5">
    <property type="entry name" value="D-AMINOACYL-TRNA DEACYLASE 1"/>
    <property type="match status" value="1"/>
</dbReference>
<dbReference type="PANTHER" id="PTHR10472">
    <property type="entry name" value="D-TYROSYL-TRNA TYR DEACYLASE"/>
    <property type="match status" value="1"/>
</dbReference>
<dbReference type="Pfam" id="PF02580">
    <property type="entry name" value="Tyr_Deacylase"/>
    <property type="match status" value="1"/>
</dbReference>
<dbReference type="SUPFAM" id="SSF69500">
    <property type="entry name" value="DTD-like"/>
    <property type="match status" value="1"/>
</dbReference>
<reference key="1">
    <citation type="journal article" date="2000" name="Nature">
        <title>DNA sequence of both chromosomes of the cholera pathogen Vibrio cholerae.</title>
        <authorList>
            <person name="Heidelberg J.F."/>
            <person name="Eisen J.A."/>
            <person name="Nelson W.C."/>
            <person name="Clayton R.A."/>
            <person name="Gwinn M.L."/>
            <person name="Dodson R.J."/>
            <person name="Haft D.H."/>
            <person name="Hickey E.K."/>
            <person name="Peterson J.D."/>
            <person name="Umayam L.A."/>
            <person name="Gill S.R."/>
            <person name="Nelson K.E."/>
            <person name="Read T.D."/>
            <person name="Tettelin H."/>
            <person name="Richardson D.L."/>
            <person name="Ermolaeva M.D."/>
            <person name="Vamathevan J.J."/>
            <person name="Bass S."/>
            <person name="Qin H."/>
            <person name="Dragoi I."/>
            <person name="Sellers P."/>
            <person name="McDonald L.A."/>
            <person name="Utterback T.R."/>
            <person name="Fleischmann R.D."/>
            <person name="Nierman W.C."/>
            <person name="White O."/>
            <person name="Salzberg S.L."/>
            <person name="Smith H.O."/>
            <person name="Colwell R.R."/>
            <person name="Mekalanos J.J."/>
            <person name="Venter J.C."/>
            <person name="Fraser C.M."/>
        </authorList>
    </citation>
    <scope>NUCLEOTIDE SEQUENCE [LARGE SCALE GENOMIC DNA]</scope>
    <source>
        <strain>ATCC 39315 / El Tor Inaba N16961</strain>
    </source>
</reference>
<proteinExistence type="inferred from homology"/>
<feature type="chain" id="PRO_0000164615" description="D-aminoacyl-tRNA deacylase">
    <location>
        <begin position="1"/>
        <end position="144"/>
    </location>
</feature>
<feature type="short sequence motif" description="Gly-cisPro motif, important for rejection of L-amino acids" evidence="1">
    <location>
        <begin position="136"/>
        <end position="137"/>
    </location>
</feature>
<comment type="function">
    <text evidence="1">An aminoacyl-tRNA editing enzyme that deacylates mischarged D-aminoacyl-tRNAs. Also deacylates mischarged glycyl-tRNA(Ala), protecting cells against glycine mischarging by AlaRS. Acts via tRNA-based rather than protein-based catalysis; rejects L-amino acids rather than detecting D-amino acids in the active site. By recycling D-aminoacyl-tRNA to D-amino acids and free tRNA molecules, this enzyme counteracts the toxicity associated with the formation of D-aminoacyl-tRNA entities in vivo and helps enforce protein L-homochirality.</text>
</comment>
<comment type="catalytic activity">
    <reaction evidence="1">
        <text>glycyl-tRNA(Ala) + H2O = tRNA(Ala) + glycine + H(+)</text>
        <dbReference type="Rhea" id="RHEA:53744"/>
        <dbReference type="Rhea" id="RHEA-COMP:9657"/>
        <dbReference type="Rhea" id="RHEA-COMP:13640"/>
        <dbReference type="ChEBI" id="CHEBI:15377"/>
        <dbReference type="ChEBI" id="CHEBI:15378"/>
        <dbReference type="ChEBI" id="CHEBI:57305"/>
        <dbReference type="ChEBI" id="CHEBI:78442"/>
        <dbReference type="ChEBI" id="CHEBI:78522"/>
        <dbReference type="EC" id="3.1.1.96"/>
    </reaction>
</comment>
<comment type="catalytic activity">
    <reaction evidence="1">
        <text>a D-aminoacyl-tRNA + H2O = a tRNA + a D-alpha-amino acid + H(+)</text>
        <dbReference type="Rhea" id="RHEA:13953"/>
        <dbReference type="Rhea" id="RHEA-COMP:10123"/>
        <dbReference type="Rhea" id="RHEA-COMP:10124"/>
        <dbReference type="ChEBI" id="CHEBI:15377"/>
        <dbReference type="ChEBI" id="CHEBI:15378"/>
        <dbReference type="ChEBI" id="CHEBI:59871"/>
        <dbReference type="ChEBI" id="CHEBI:78442"/>
        <dbReference type="ChEBI" id="CHEBI:79333"/>
        <dbReference type="EC" id="3.1.1.96"/>
    </reaction>
</comment>
<comment type="subunit">
    <text evidence="1">Homodimer.</text>
</comment>
<comment type="subcellular location">
    <subcellularLocation>
        <location evidence="1">Cytoplasm</location>
    </subcellularLocation>
</comment>
<comment type="domain">
    <text evidence="1">A Gly-cisPro motif from one monomer fits into the active site of the other monomer to allow specific chiral rejection of L-amino acids.</text>
</comment>
<comment type="similarity">
    <text evidence="1">Belongs to the DTD family.</text>
</comment>
<sequence>MIALIQRVSEAAVRVDGEVVGAIDKGLLVLLGVEREDDEAKAKRLVERVTSYRVFEDSEGKMNLSVKDVGGSVLVVSQFTLPADTKKGTRAGFSRGAAPQEAERLYDYFSDLCAQILPTERGRFAADMKVSLINDGPVTFWLQA</sequence>
<name>DTD_VIBCH</name>
<evidence type="ECO:0000255" key="1">
    <source>
        <dbReference type="HAMAP-Rule" id="MF_00518"/>
    </source>
</evidence>
<organism>
    <name type="scientific">Vibrio cholerae serotype O1 (strain ATCC 39315 / El Tor Inaba N16961)</name>
    <dbReference type="NCBI Taxonomy" id="243277"/>
    <lineage>
        <taxon>Bacteria</taxon>
        <taxon>Pseudomonadati</taxon>
        <taxon>Pseudomonadota</taxon>
        <taxon>Gammaproteobacteria</taxon>
        <taxon>Vibrionales</taxon>
        <taxon>Vibrionaceae</taxon>
        <taxon>Vibrio</taxon>
    </lineage>
</organism>
<gene>
    <name evidence="1" type="primary">dtd</name>
    <name type="ordered locus">VC_2741</name>
</gene>
<accession>Q9KNJ7</accession>
<keyword id="KW-0963">Cytoplasm</keyword>
<keyword id="KW-0378">Hydrolase</keyword>
<keyword id="KW-1185">Reference proteome</keyword>
<keyword id="KW-0694">RNA-binding</keyword>
<keyword id="KW-0820">tRNA-binding</keyword>